<protein>
    <recommendedName>
        <fullName evidence="5">(S)-ureidoglycine aminohydrolase</fullName>
        <shortName evidence="5">UGHY</shortName>
        <shortName>UGlyAH</shortName>
        <ecNumber evidence="3 8">3.5.3.26</ecNumber>
    </recommendedName>
</protein>
<organism>
    <name type="scientific">Escherichia coli (strain K12)</name>
    <dbReference type="NCBI Taxonomy" id="83333"/>
    <lineage>
        <taxon>Bacteria</taxon>
        <taxon>Pseudomonadati</taxon>
        <taxon>Pseudomonadota</taxon>
        <taxon>Gammaproteobacteria</taxon>
        <taxon>Enterobacterales</taxon>
        <taxon>Enterobacteriaceae</taxon>
        <taxon>Escherichia</taxon>
    </lineage>
</organism>
<sequence length="261" mass="28730">MGYLNNVTGYREDLLANRAIVKHGNFALLTPDGLVKNIIPGFENCDATILSTPKLGASFVDYLVTLHQNGGNQQGFGGEGIETFLYVISGNITAKAEGKTFALSEGGYLYCPPGSLMTFVNAQAEDSQIFLYKRRYVPVEGYAPWLVSGNASELERIHYEGMDDVILLDFLPKELGFDMNMHILSFAPGASHGYIETHVQEHGAYILSGQGVYNLDNNWIPVKKGDYIFMGAYSLQAGYGVGRGEAFSYIYSKDCNRDVEI</sequence>
<comment type="function">
    <text evidence="3 4">Involved in the anaerobic nitrogen utilization via the assimilation of allantoin. Catalyzes the second stereospecific hydrolysis reaction (deamination) of the allantoin degradation pathway, producing S-ureidoglycolate and ammonia from S-ureidoglycine.</text>
</comment>
<comment type="catalytic activity">
    <reaction evidence="3 8">
        <text>(S)-2-ureidoglycine + H2O = (S)-ureidoglycolate + NH4(+)</text>
        <dbReference type="Rhea" id="RHEA:25241"/>
        <dbReference type="ChEBI" id="CHEBI:15377"/>
        <dbReference type="ChEBI" id="CHEBI:28938"/>
        <dbReference type="ChEBI" id="CHEBI:57296"/>
        <dbReference type="ChEBI" id="CHEBI:59947"/>
        <dbReference type="EC" id="3.5.3.26"/>
    </reaction>
</comment>
<comment type="cofactor">
    <cofactor evidence="4">
        <name>Mn(2+)</name>
        <dbReference type="ChEBI" id="CHEBI:29035"/>
    </cofactor>
    <text evidence="4">Also able to use Co(2+).</text>
</comment>
<comment type="subunit">
    <text evidence="8 9">Monomer.</text>
</comment>
<comment type="subcellular location">
    <subcellularLocation>
        <location evidence="3 4">Cytoplasm</location>
    </subcellularLocation>
</comment>
<comment type="induction">
    <text evidence="7">By glyoxylate and allantoin under anaerobic conditions.</text>
</comment>
<comment type="similarity">
    <text evidence="6">Belongs to the UGHY family.</text>
</comment>
<comment type="sequence caution" evidence="6">
    <conflict type="frameshift">
        <sequence resource="EMBL-CDS" id="AAB93856"/>
    </conflict>
</comment>
<keyword id="KW-0002">3D-structure</keyword>
<keyword id="KW-0963">Cytoplasm</keyword>
<keyword id="KW-0378">Hydrolase</keyword>
<keyword id="KW-0464">Manganese</keyword>
<keyword id="KW-0479">Metal-binding</keyword>
<keyword id="KW-0659">Purine metabolism</keyword>
<keyword id="KW-1185">Reference proteome</keyword>
<feature type="chain" id="PRO_0000168644" description="(S)-ureidoglycine aminohydrolase">
    <location>
        <begin position="1"/>
        <end position="261"/>
    </location>
</feature>
<feature type="domain" description="Cupin type-2" evidence="2">
    <location>
        <begin position="184"/>
        <end position="230"/>
    </location>
</feature>
<feature type="binding site" evidence="1">
    <location>
        <position position="196"/>
    </location>
    <ligand>
        <name>Mn(2+)</name>
        <dbReference type="ChEBI" id="CHEBI:29035"/>
    </ligand>
</feature>
<feature type="binding site" evidence="1">
    <location>
        <position position="196"/>
    </location>
    <ligand>
        <name>substrate</name>
    </ligand>
</feature>
<feature type="binding site" evidence="1">
    <location>
        <position position="198"/>
    </location>
    <ligand>
        <name>Mn(2+)</name>
        <dbReference type="ChEBI" id="CHEBI:29035"/>
    </ligand>
</feature>
<feature type="binding site" evidence="1">
    <location>
        <position position="202"/>
    </location>
    <ligand>
        <name>Mn(2+)</name>
        <dbReference type="ChEBI" id="CHEBI:29035"/>
    </ligand>
</feature>
<feature type="binding site" evidence="1">
    <location>
        <position position="236"/>
    </location>
    <ligand>
        <name>Mn(2+)</name>
        <dbReference type="ChEBI" id="CHEBI:29035"/>
    </ligand>
</feature>
<feature type="binding site" evidence="1">
    <location>
        <position position="236"/>
    </location>
    <ligand>
        <name>substrate</name>
    </ligand>
</feature>
<feature type="binding site" evidence="1">
    <location>
        <position position="249"/>
    </location>
    <ligand>
        <name>substrate</name>
    </ligand>
</feature>
<feature type="binding site" evidence="1">
    <location>
        <position position="253"/>
    </location>
    <ligand>
        <name>substrate</name>
    </ligand>
</feature>
<feature type="sequence conflict" description="In Ref. 1; AAB93856 and 2; AAB40267." evidence="6" ref="1 2">
    <original>A</original>
    <variation>T</variation>
    <location>
        <position position="204"/>
    </location>
</feature>
<feature type="sequence conflict" description="In Ref. 2; AAB40267." evidence="6" ref="2">
    <original>GDYIFMGAYSLQAGYGVGRGEAFSYIYSKDCNRDVEI</original>
    <variation>RRLHLYGRLFFTGWLWCRAW</variation>
    <location>
        <begin position="225"/>
        <end position="261"/>
    </location>
</feature>
<feature type="helix" evidence="10">
    <location>
        <begin position="11"/>
        <end position="14"/>
    </location>
</feature>
<feature type="strand" evidence="10">
    <location>
        <begin position="25"/>
        <end position="29"/>
    </location>
</feature>
<feature type="helix" evidence="10">
    <location>
        <begin position="31"/>
        <end position="33"/>
    </location>
</feature>
<feature type="strand" evidence="10">
    <location>
        <begin position="42"/>
        <end position="49"/>
    </location>
</feature>
<feature type="helix" evidence="10">
    <location>
        <begin position="53"/>
        <end position="55"/>
    </location>
</feature>
<feature type="strand" evidence="10">
    <location>
        <begin position="58"/>
        <end position="74"/>
    </location>
</feature>
<feature type="strand" evidence="10">
    <location>
        <begin position="81"/>
        <end position="96"/>
    </location>
</feature>
<feature type="strand" evidence="10">
    <location>
        <begin position="99"/>
        <end position="104"/>
    </location>
</feature>
<feature type="strand" evidence="10">
    <location>
        <begin position="107"/>
        <end position="111"/>
    </location>
</feature>
<feature type="strand" evidence="10">
    <location>
        <begin position="118"/>
        <end position="121"/>
    </location>
</feature>
<feature type="strand" evidence="10">
    <location>
        <begin position="123"/>
        <end position="125"/>
    </location>
</feature>
<feature type="strand" evidence="10">
    <location>
        <begin position="127"/>
        <end position="135"/>
    </location>
</feature>
<feature type="strand" evidence="10">
    <location>
        <begin position="147"/>
        <end position="150"/>
    </location>
</feature>
<feature type="helix" evidence="10">
    <location>
        <begin position="151"/>
        <end position="153"/>
    </location>
</feature>
<feature type="strand" evidence="10">
    <location>
        <begin position="166"/>
        <end position="169"/>
    </location>
</feature>
<feature type="strand" evidence="10">
    <location>
        <begin position="178"/>
        <end position="186"/>
    </location>
</feature>
<feature type="strand" evidence="10">
    <location>
        <begin position="194"/>
        <end position="200"/>
    </location>
</feature>
<feature type="strand" evidence="10">
    <location>
        <begin position="202"/>
        <end position="217"/>
    </location>
</feature>
<feature type="strand" evidence="10">
    <location>
        <begin position="219"/>
        <end position="223"/>
    </location>
</feature>
<feature type="strand" evidence="10">
    <location>
        <begin position="227"/>
        <end position="230"/>
    </location>
</feature>
<feature type="strand" evidence="10">
    <location>
        <begin position="232"/>
        <end position="240"/>
    </location>
</feature>
<feature type="strand" evidence="10">
    <location>
        <begin position="247"/>
        <end position="254"/>
    </location>
</feature>
<name>ALLE_ECOLI</name>
<reference key="1">
    <citation type="journal article" date="1999" name="J. Bacteriol.">
        <title>Genetic analysis of a chromosomal region containing genes required for assimilation of allantoin nitrogen and linked glyoxylate metabolism in Escherichia coli.</title>
        <authorList>
            <person name="Cusa E."/>
            <person name="Obradors N."/>
            <person name="Baldoma L."/>
            <person name="Badia J."/>
            <person name="Aguilar J."/>
        </authorList>
    </citation>
    <scope>NUCLEOTIDE SEQUENCE [GENOMIC DNA]</scope>
    <scope>INDUCTION</scope>
    <source>
        <strain>K12 / ECL1</strain>
    </source>
</reference>
<reference key="2">
    <citation type="submission" date="1997-01" db="EMBL/GenBank/DDBJ databases">
        <title>Sequence of minutes 4-25 of Escherichia coli.</title>
        <authorList>
            <person name="Chung E."/>
            <person name="Allen E."/>
            <person name="Araujo R."/>
            <person name="Aparicio A.M."/>
            <person name="Davis K."/>
            <person name="Duncan M."/>
            <person name="Federspiel N."/>
            <person name="Hyman R."/>
            <person name="Kalman S."/>
            <person name="Komp C."/>
            <person name="Kurdi O."/>
            <person name="Lew H."/>
            <person name="Lin D."/>
            <person name="Namath A."/>
            <person name="Oefner P."/>
            <person name="Roberts D."/>
            <person name="Schramm S."/>
            <person name="Davis R.W."/>
        </authorList>
    </citation>
    <scope>NUCLEOTIDE SEQUENCE [LARGE SCALE GENOMIC DNA]</scope>
    <source>
        <strain>K12 / MG1655 / ATCC 47076</strain>
    </source>
</reference>
<reference key="3">
    <citation type="journal article" date="1997" name="Science">
        <title>The complete genome sequence of Escherichia coli K-12.</title>
        <authorList>
            <person name="Blattner F.R."/>
            <person name="Plunkett G. III"/>
            <person name="Bloch C.A."/>
            <person name="Perna N.T."/>
            <person name="Burland V."/>
            <person name="Riley M."/>
            <person name="Collado-Vides J."/>
            <person name="Glasner J.D."/>
            <person name="Rode C.K."/>
            <person name="Mayhew G.F."/>
            <person name="Gregor J."/>
            <person name="Davis N.W."/>
            <person name="Kirkpatrick H.A."/>
            <person name="Goeden M.A."/>
            <person name="Rose D.J."/>
            <person name="Mau B."/>
            <person name="Shao Y."/>
        </authorList>
    </citation>
    <scope>NUCLEOTIDE SEQUENCE [LARGE SCALE GENOMIC DNA]</scope>
    <source>
        <strain>K12 / MG1655 / ATCC 47076</strain>
    </source>
</reference>
<reference key="4">
    <citation type="journal article" date="2006" name="Mol. Syst. Biol.">
        <title>Highly accurate genome sequences of Escherichia coli K-12 strains MG1655 and W3110.</title>
        <authorList>
            <person name="Hayashi K."/>
            <person name="Morooka N."/>
            <person name="Yamamoto Y."/>
            <person name="Fujita K."/>
            <person name="Isono K."/>
            <person name="Choi S."/>
            <person name="Ohtsubo E."/>
            <person name="Baba T."/>
            <person name="Wanner B.L."/>
            <person name="Mori H."/>
            <person name="Horiuchi T."/>
        </authorList>
    </citation>
    <scope>NUCLEOTIDE SEQUENCE [LARGE SCALE GENOMIC DNA]</scope>
    <source>
        <strain>K12 / W3110 / ATCC 27325 / DSM 5911</strain>
    </source>
</reference>
<reference key="5">
    <citation type="journal article" date="2010" name="ACS Chem. Biol.">
        <title>Chemical basis of nitrogen recovery through the ureide pathway: formation and hydrolysis of S-ureidoglycine in plants and bacteria.</title>
        <authorList>
            <person name="Serventi F."/>
            <person name="Ramazzina I."/>
            <person name="Lamberto I."/>
            <person name="Puggioni V."/>
            <person name="Gatti R."/>
            <person name="Percudani R."/>
        </authorList>
    </citation>
    <scope>FUNCTION</scope>
    <scope>CATALYTIC ACTIVITY</scope>
    <scope>COFACTOR</scope>
    <scope>SUBCELLULAR LOCATION</scope>
    <scope>SUBUNIT</scope>
</reference>
<reference key="6">
    <citation type="journal article" date="2010" name="Nat. Chem. Biol.">
        <title>Ureide catabolism in Arabidopsis thaliana and Escherichia coli.</title>
        <authorList>
            <person name="Werner A.K."/>
            <person name="Romeis T."/>
            <person name="Witte C.P."/>
        </authorList>
    </citation>
    <scope>FUNCTION</scope>
    <scope>CATALYTIC ACTIVITY</scope>
    <scope>SUBCELLULAR LOCATION</scope>
</reference>
<reference key="7">
    <citation type="submission" date="2005-01" db="PDB data bank">
        <title>Crystal structure of ylbA, hypothetical protein from E.coli.</title>
        <authorList>
            <consortium name="New York structural genomics research consortium (NYSGRC)"/>
        </authorList>
    </citation>
    <scope>X-RAY CRYSTALLOGRAPHY (2.6 ANGSTROMS) OF 1-261</scope>
    <scope>SUBUNIT</scope>
</reference>
<evidence type="ECO:0000250" key="1">
    <source>
        <dbReference type="UniProtKB" id="Q8GXV5"/>
    </source>
</evidence>
<evidence type="ECO:0000255" key="2"/>
<evidence type="ECO:0000269" key="3">
    <source>
    </source>
</evidence>
<evidence type="ECO:0000269" key="4">
    <source>
    </source>
</evidence>
<evidence type="ECO:0000303" key="5">
    <source>
    </source>
</evidence>
<evidence type="ECO:0000305" key="6"/>
<evidence type="ECO:0000305" key="7">
    <source>
    </source>
</evidence>
<evidence type="ECO:0000305" key="8">
    <source>
    </source>
</evidence>
<evidence type="ECO:0000305" key="9">
    <source ref="7"/>
</evidence>
<evidence type="ECO:0007829" key="10">
    <source>
        <dbReference type="PDB" id="1RC6"/>
    </source>
</evidence>
<dbReference type="EC" id="3.5.3.26" evidence="3 8"/>
<dbReference type="EMBL" id="U89279">
    <property type="protein sequence ID" value="AAB93856.1"/>
    <property type="status" value="ALT_FRAME"/>
    <property type="molecule type" value="Genomic_DNA"/>
</dbReference>
<dbReference type="EMBL" id="U82664">
    <property type="protein sequence ID" value="AAB40267.1"/>
    <property type="molecule type" value="Genomic_DNA"/>
</dbReference>
<dbReference type="EMBL" id="U00096">
    <property type="protein sequence ID" value="AAC73617.1"/>
    <property type="molecule type" value="Genomic_DNA"/>
</dbReference>
<dbReference type="EMBL" id="AP009048">
    <property type="protein sequence ID" value="BAE76293.1"/>
    <property type="molecule type" value="Genomic_DNA"/>
</dbReference>
<dbReference type="PIR" id="B64783">
    <property type="entry name" value="B64783"/>
</dbReference>
<dbReference type="RefSeq" id="NP_415048.1">
    <property type="nucleotide sequence ID" value="NC_000913.3"/>
</dbReference>
<dbReference type="RefSeq" id="WP_000540997.1">
    <property type="nucleotide sequence ID" value="NZ_SSZK01000024.1"/>
</dbReference>
<dbReference type="PDB" id="1RC6">
    <property type="method" value="X-ray"/>
    <property type="resolution" value="2.60 A"/>
    <property type="chains" value="A/B=1-261"/>
</dbReference>
<dbReference type="PDBsum" id="1RC6"/>
<dbReference type="SMR" id="P75713"/>
<dbReference type="BioGRID" id="4262016">
    <property type="interactions" value="16"/>
</dbReference>
<dbReference type="DIP" id="DIP-12689N"/>
<dbReference type="FunCoup" id="P75713">
    <property type="interactions" value="342"/>
</dbReference>
<dbReference type="IntAct" id="P75713">
    <property type="interactions" value="7"/>
</dbReference>
<dbReference type="STRING" id="511145.b0515"/>
<dbReference type="jPOST" id="P75713"/>
<dbReference type="PaxDb" id="511145-b0515"/>
<dbReference type="EnsemblBacteria" id="AAC73617">
    <property type="protein sequence ID" value="AAC73617"/>
    <property type="gene ID" value="b0515"/>
</dbReference>
<dbReference type="GeneID" id="945149"/>
<dbReference type="KEGG" id="ecj:JW0503"/>
<dbReference type="KEGG" id="eco:b0515"/>
<dbReference type="KEGG" id="ecoc:C3026_02525"/>
<dbReference type="PATRIC" id="fig|511145.12.peg.535"/>
<dbReference type="EchoBASE" id="EB3387"/>
<dbReference type="eggNOG" id="COG3257">
    <property type="taxonomic scope" value="Bacteria"/>
</dbReference>
<dbReference type="HOGENOM" id="CLU_056083_3_0_6"/>
<dbReference type="InParanoid" id="P75713"/>
<dbReference type="OMA" id="DVRHDMH"/>
<dbReference type="OrthoDB" id="9814939at2"/>
<dbReference type="PhylomeDB" id="P75713"/>
<dbReference type="BioCyc" id="EcoCyc:G6284-MONOMER"/>
<dbReference type="BioCyc" id="MetaCyc:G6284-MONOMER"/>
<dbReference type="BRENDA" id="3.5.3.26">
    <property type="organism ID" value="2026"/>
</dbReference>
<dbReference type="EvolutionaryTrace" id="P75713"/>
<dbReference type="PRO" id="PR:P75713"/>
<dbReference type="Proteomes" id="UP000000625">
    <property type="component" value="Chromosome"/>
</dbReference>
<dbReference type="GO" id="GO:0005737">
    <property type="term" value="C:cytoplasm"/>
    <property type="evidence" value="ECO:0007669"/>
    <property type="project" value="UniProtKB-SubCell"/>
</dbReference>
<dbReference type="GO" id="GO:0030145">
    <property type="term" value="F:manganese ion binding"/>
    <property type="evidence" value="ECO:0000314"/>
    <property type="project" value="EcoCyc"/>
</dbReference>
<dbReference type="GO" id="GO:0071522">
    <property type="term" value="F:ureidoglycine aminohydrolase activity"/>
    <property type="evidence" value="ECO:0000314"/>
    <property type="project" value="EcoCyc"/>
</dbReference>
<dbReference type="GO" id="GO:0006144">
    <property type="term" value="P:purine nucleobase metabolic process"/>
    <property type="evidence" value="ECO:0007669"/>
    <property type="project" value="UniProtKB-KW"/>
</dbReference>
<dbReference type="CDD" id="cd02212">
    <property type="entry name" value="cupin_UGlyAH_C"/>
    <property type="match status" value="1"/>
</dbReference>
<dbReference type="CDD" id="cd02211">
    <property type="entry name" value="cupin_UGlyAH_N"/>
    <property type="match status" value="1"/>
</dbReference>
<dbReference type="FunFam" id="2.60.120.10:FF:000084">
    <property type="entry name" value="(S)-ureidoglycine aminohydrolase"/>
    <property type="match status" value="1"/>
</dbReference>
<dbReference type="Gene3D" id="2.60.120.10">
    <property type="entry name" value="Jelly Rolls"/>
    <property type="match status" value="1"/>
</dbReference>
<dbReference type="InterPro" id="IPR013096">
    <property type="entry name" value="Cupin_2"/>
</dbReference>
<dbReference type="InterPro" id="IPR014710">
    <property type="entry name" value="RmlC-like_jellyroll"/>
</dbReference>
<dbReference type="InterPro" id="IPR011051">
    <property type="entry name" value="RmlC_Cupin_sf"/>
</dbReference>
<dbReference type="InterPro" id="IPR017627">
    <property type="entry name" value="UGHY"/>
</dbReference>
<dbReference type="InterPro" id="IPR044697">
    <property type="entry name" value="UGlyAH_cupin_C"/>
</dbReference>
<dbReference type="InterPro" id="IPR008579">
    <property type="entry name" value="UGlyAH_Cupin_dom"/>
</dbReference>
<dbReference type="InterPro" id="IPR044704">
    <property type="entry name" value="UGlyAH_cupin_N"/>
</dbReference>
<dbReference type="NCBIfam" id="TIGR03214">
    <property type="entry name" value="ura-cupin"/>
    <property type="match status" value="1"/>
</dbReference>
<dbReference type="PANTHER" id="PTHR34571">
    <property type="entry name" value="(S)-UREIDOGLYCINE AMINOHYDROLASE"/>
    <property type="match status" value="1"/>
</dbReference>
<dbReference type="PANTHER" id="PTHR34571:SF1">
    <property type="entry name" value="(S)-UREIDOGLYCINE AMINOHYDROLASE"/>
    <property type="match status" value="1"/>
</dbReference>
<dbReference type="Pfam" id="PF07883">
    <property type="entry name" value="Cupin_2"/>
    <property type="match status" value="1"/>
</dbReference>
<dbReference type="Pfam" id="PF05899">
    <property type="entry name" value="Cupin_3"/>
    <property type="match status" value="1"/>
</dbReference>
<dbReference type="SUPFAM" id="SSF51182">
    <property type="entry name" value="RmlC-like cupins"/>
    <property type="match status" value="1"/>
</dbReference>
<proteinExistence type="evidence at protein level"/>
<gene>
    <name type="primary">allE</name>
    <name type="synonym">glxB6</name>
    <name type="synonym">ylbA</name>
    <name type="ordered locus">b0515</name>
    <name type="ordered locus">JW0503</name>
</gene>
<accession>P75713</accession>
<accession>O54410</accession>
<accession>P77128</accession>
<accession>Q2MBR3</accession>